<feature type="chain" id="PRO_0000130110" description="Small ribosomal subunit protein uS3">
    <location>
        <begin position="1"/>
        <end position="249"/>
    </location>
</feature>
<feature type="domain" description="KH type-2" evidence="1">
    <location>
        <begin position="39"/>
        <end position="108"/>
    </location>
</feature>
<feature type="region of interest" description="Disordered" evidence="2">
    <location>
        <begin position="214"/>
        <end position="249"/>
    </location>
</feature>
<feature type="compositionally biased region" description="Basic and acidic residues" evidence="2">
    <location>
        <begin position="220"/>
        <end position="235"/>
    </location>
</feature>
<feature type="compositionally biased region" description="Basic residues" evidence="2">
    <location>
        <begin position="236"/>
        <end position="249"/>
    </location>
</feature>
<reference key="1">
    <citation type="journal article" date="1999" name="Science">
        <title>Genome sequence of the radioresistant bacterium Deinococcus radiodurans R1.</title>
        <authorList>
            <person name="White O."/>
            <person name="Eisen J.A."/>
            <person name="Heidelberg J.F."/>
            <person name="Hickey E.K."/>
            <person name="Peterson J.D."/>
            <person name="Dodson R.J."/>
            <person name="Haft D.H."/>
            <person name="Gwinn M.L."/>
            <person name="Nelson W.C."/>
            <person name="Richardson D.L."/>
            <person name="Moffat K.S."/>
            <person name="Qin H."/>
            <person name="Jiang L."/>
            <person name="Pamphile W."/>
            <person name="Crosby M."/>
            <person name="Shen M."/>
            <person name="Vamathevan J.J."/>
            <person name="Lam P."/>
            <person name="McDonald L.A."/>
            <person name="Utterback T.R."/>
            <person name="Zalewski C."/>
            <person name="Makarova K.S."/>
            <person name="Aravind L."/>
            <person name="Daly M.J."/>
            <person name="Minton K.W."/>
            <person name="Fleischmann R.D."/>
            <person name="Ketchum K.A."/>
            <person name="Nelson K.E."/>
            <person name="Salzberg S.L."/>
            <person name="Smith H.O."/>
            <person name="Venter J.C."/>
            <person name="Fraser C.M."/>
        </authorList>
    </citation>
    <scope>NUCLEOTIDE SEQUENCE [LARGE SCALE GENOMIC DNA]</scope>
    <source>
        <strain>ATCC 13939 / DSM 20539 / JCM 16871 / CCUG 27074 / LMG 4051 / NBRC 15346 / NCIMB 9279 / VKM B-1422 / R1</strain>
    </source>
</reference>
<proteinExistence type="inferred from homology"/>
<organism>
    <name type="scientific">Deinococcus radiodurans (strain ATCC 13939 / DSM 20539 / JCM 16871 / CCUG 27074 / LMG 4051 / NBRC 15346 / NCIMB 9279 / VKM B-1422 / R1)</name>
    <dbReference type="NCBI Taxonomy" id="243230"/>
    <lineage>
        <taxon>Bacteria</taxon>
        <taxon>Thermotogati</taxon>
        <taxon>Deinococcota</taxon>
        <taxon>Deinococci</taxon>
        <taxon>Deinococcales</taxon>
        <taxon>Deinococcaceae</taxon>
        <taxon>Deinococcus</taxon>
    </lineage>
</organism>
<name>RS3_DEIRA</name>
<evidence type="ECO:0000255" key="1">
    <source>
        <dbReference type="HAMAP-Rule" id="MF_01309"/>
    </source>
</evidence>
<evidence type="ECO:0000256" key="2">
    <source>
        <dbReference type="SAM" id="MobiDB-lite"/>
    </source>
</evidence>
<evidence type="ECO:0000305" key="3"/>
<accession>Q9RXJ6</accession>
<gene>
    <name evidence="1" type="primary">rpsC</name>
    <name type="ordered locus">DR_0317</name>
</gene>
<keyword id="KW-1185">Reference proteome</keyword>
<keyword id="KW-0687">Ribonucleoprotein</keyword>
<keyword id="KW-0689">Ribosomal protein</keyword>
<keyword id="KW-0694">RNA-binding</keyword>
<keyword id="KW-0699">rRNA-binding</keyword>
<sequence>MGNKINPNGFRLGVTKGWNSRWYAGKKQYASLLKEDEQIRQLINKKLAAAGIARIEIERAGQQVNVIISAAKPGVVIGKGGESIKELRGDIERLVSAGTVAVNVAEIPNPNISAPLVALRIAEQIERRFAFRRAMKQAAQRVMESGARGVKVILSGRLGGAEQARTEKVLEGRVPLHTLRADIDYGTALARTTYGILGIKVLVFNGEVIGGKTETFARPQRRDRDERRPEGGDRPARRRPTARRRTGGE</sequence>
<protein>
    <recommendedName>
        <fullName evidence="1">Small ribosomal subunit protein uS3</fullName>
    </recommendedName>
    <alternativeName>
        <fullName evidence="3">30S ribosomal protein S3</fullName>
    </alternativeName>
</protein>
<comment type="function">
    <text evidence="1">Binds the lower part of the 30S subunit head. Binds mRNA in the 70S ribosome, positioning it for translation.</text>
</comment>
<comment type="subunit">
    <text evidence="1">Part of the 30S ribosomal subunit. Forms a tight complex with proteins S10 and S14.</text>
</comment>
<comment type="similarity">
    <text evidence="1">Belongs to the universal ribosomal protein uS3 family.</text>
</comment>
<dbReference type="EMBL" id="AE000513">
    <property type="protein sequence ID" value="AAF09898.1"/>
    <property type="molecule type" value="Genomic_DNA"/>
</dbReference>
<dbReference type="PIR" id="E75534">
    <property type="entry name" value="E75534"/>
</dbReference>
<dbReference type="RefSeq" id="NP_294040.1">
    <property type="nucleotide sequence ID" value="NC_001263.1"/>
</dbReference>
<dbReference type="RefSeq" id="WP_010886962.1">
    <property type="nucleotide sequence ID" value="NC_001263.1"/>
</dbReference>
<dbReference type="SMR" id="Q9RXJ6"/>
<dbReference type="FunCoup" id="Q9RXJ6">
    <property type="interactions" value="491"/>
</dbReference>
<dbReference type="STRING" id="243230.DR_0317"/>
<dbReference type="PaxDb" id="243230-DR_0317"/>
<dbReference type="EnsemblBacteria" id="AAF09898">
    <property type="protein sequence ID" value="AAF09898"/>
    <property type="gene ID" value="DR_0317"/>
</dbReference>
<dbReference type="GeneID" id="69516549"/>
<dbReference type="KEGG" id="dra:DR_0317"/>
<dbReference type="PATRIC" id="fig|243230.17.peg.483"/>
<dbReference type="eggNOG" id="COG0092">
    <property type="taxonomic scope" value="Bacteria"/>
</dbReference>
<dbReference type="HOGENOM" id="CLU_058591_0_0_0"/>
<dbReference type="InParanoid" id="Q9RXJ6"/>
<dbReference type="OrthoDB" id="9806396at2"/>
<dbReference type="Proteomes" id="UP000002524">
    <property type="component" value="Chromosome 1"/>
</dbReference>
<dbReference type="GO" id="GO:0022627">
    <property type="term" value="C:cytosolic small ribosomal subunit"/>
    <property type="evidence" value="ECO:0000318"/>
    <property type="project" value="GO_Central"/>
</dbReference>
<dbReference type="GO" id="GO:0003729">
    <property type="term" value="F:mRNA binding"/>
    <property type="evidence" value="ECO:0007669"/>
    <property type="project" value="UniProtKB-UniRule"/>
</dbReference>
<dbReference type="GO" id="GO:0019843">
    <property type="term" value="F:rRNA binding"/>
    <property type="evidence" value="ECO:0007669"/>
    <property type="project" value="UniProtKB-UniRule"/>
</dbReference>
<dbReference type="GO" id="GO:0003735">
    <property type="term" value="F:structural constituent of ribosome"/>
    <property type="evidence" value="ECO:0000318"/>
    <property type="project" value="GO_Central"/>
</dbReference>
<dbReference type="GO" id="GO:0006412">
    <property type="term" value="P:translation"/>
    <property type="evidence" value="ECO:0007669"/>
    <property type="project" value="UniProtKB-UniRule"/>
</dbReference>
<dbReference type="CDD" id="cd02412">
    <property type="entry name" value="KH-II_30S_S3"/>
    <property type="match status" value="1"/>
</dbReference>
<dbReference type="FunFam" id="3.30.300.20:FF:000001">
    <property type="entry name" value="30S ribosomal protein S3"/>
    <property type="match status" value="1"/>
</dbReference>
<dbReference type="Gene3D" id="3.30.300.20">
    <property type="match status" value="1"/>
</dbReference>
<dbReference type="Gene3D" id="3.30.1140.32">
    <property type="entry name" value="Ribosomal protein S3, C-terminal domain"/>
    <property type="match status" value="1"/>
</dbReference>
<dbReference type="HAMAP" id="MF_01309_B">
    <property type="entry name" value="Ribosomal_uS3_B"/>
    <property type="match status" value="1"/>
</dbReference>
<dbReference type="InterPro" id="IPR015946">
    <property type="entry name" value="KH_dom-like_a/b"/>
</dbReference>
<dbReference type="InterPro" id="IPR004044">
    <property type="entry name" value="KH_dom_type_2"/>
</dbReference>
<dbReference type="InterPro" id="IPR009019">
    <property type="entry name" value="KH_sf_prok-type"/>
</dbReference>
<dbReference type="InterPro" id="IPR036419">
    <property type="entry name" value="Ribosomal_S3_C_sf"/>
</dbReference>
<dbReference type="InterPro" id="IPR005704">
    <property type="entry name" value="Ribosomal_uS3_bac-typ"/>
</dbReference>
<dbReference type="InterPro" id="IPR001351">
    <property type="entry name" value="Ribosomal_uS3_C"/>
</dbReference>
<dbReference type="InterPro" id="IPR018280">
    <property type="entry name" value="Ribosomal_uS3_CS"/>
</dbReference>
<dbReference type="NCBIfam" id="TIGR01009">
    <property type="entry name" value="rpsC_bact"/>
    <property type="match status" value="1"/>
</dbReference>
<dbReference type="PANTHER" id="PTHR11760">
    <property type="entry name" value="30S/40S RIBOSOMAL PROTEIN S3"/>
    <property type="match status" value="1"/>
</dbReference>
<dbReference type="PANTHER" id="PTHR11760:SF19">
    <property type="entry name" value="SMALL RIBOSOMAL SUBUNIT PROTEIN US3C"/>
    <property type="match status" value="1"/>
</dbReference>
<dbReference type="Pfam" id="PF07650">
    <property type="entry name" value="KH_2"/>
    <property type="match status" value="1"/>
</dbReference>
<dbReference type="Pfam" id="PF00189">
    <property type="entry name" value="Ribosomal_S3_C"/>
    <property type="match status" value="1"/>
</dbReference>
<dbReference type="SUPFAM" id="SSF54814">
    <property type="entry name" value="Prokaryotic type KH domain (KH-domain type II)"/>
    <property type="match status" value="1"/>
</dbReference>
<dbReference type="SUPFAM" id="SSF54821">
    <property type="entry name" value="Ribosomal protein S3 C-terminal domain"/>
    <property type="match status" value="1"/>
</dbReference>
<dbReference type="PROSITE" id="PS50823">
    <property type="entry name" value="KH_TYPE_2"/>
    <property type="match status" value="1"/>
</dbReference>
<dbReference type="PROSITE" id="PS00548">
    <property type="entry name" value="RIBOSOMAL_S3"/>
    <property type="match status" value="1"/>
</dbReference>